<proteinExistence type="inferred from homology"/>
<dbReference type="EMBL" id="CP000627">
    <property type="protein sequence ID" value="ABQ20353.1"/>
    <property type="molecule type" value="Genomic_DNA"/>
</dbReference>
<dbReference type="EMBL" id="CP001235">
    <property type="protein sequence ID" value="ACP09984.1"/>
    <property type="molecule type" value="Genomic_DNA"/>
</dbReference>
<dbReference type="RefSeq" id="WP_000350068.1">
    <property type="nucleotide sequence ID" value="NZ_JAACZH010000001.1"/>
</dbReference>
<dbReference type="SMR" id="A5F727"/>
<dbReference type="KEGG" id="vco:VC0395_A1467"/>
<dbReference type="KEGG" id="vcr:VC395_1991"/>
<dbReference type="PATRIC" id="fig|345073.21.peg.1924"/>
<dbReference type="eggNOG" id="COG2835">
    <property type="taxonomic scope" value="Bacteria"/>
</dbReference>
<dbReference type="HOGENOM" id="CLU_155659_3_1_6"/>
<dbReference type="OrthoDB" id="9812205at2"/>
<dbReference type="Proteomes" id="UP000000249">
    <property type="component" value="Chromosome 2"/>
</dbReference>
<dbReference type="GO" id="GO:0005829">
    <property type="term" value="C:cytosol"/>
    <property type="evidence" value="ECO:0007669"/>
    <property type="project" value="TreeGrafter"/>
</dbReference>
<dbReference type="FunFam" id="2.20.25.10:FF:000002">
    <property type="entry name" value="UPF0434 protein YcaR"/>
    <property type="match status" value="1"/>
</dbReference>
<dbReference type="Gene3D" id="2.20.25.10">
    <property type="match status" value="1"/>
</dbReference>
<dbReference type="HAMAP" id="MF_01187">
    <property type="entry name" value="UPF0434"/>
    <property type="match status" value="1"/>
</dbReference>
<dbReference type="InterPro" id="IPR005651">
    <property type="entry name" value="Trm112-like"/>
</dbReference>
<dbReference type="PANTHER" id="PTHR33505:SF4">
    <property type="entry name" value="PROTEIN PREY, MITOCHONDRIAL"/>
    <property type="match status" value="1"/>
</dbReference>
<dbReference type="PANTHER" id="PTHR33505">
    <property type="entry name" value="ZGC:162634"/>
    <property type="match status" value="1"/>
</dbReference>
<dbReference type="Pfam" id="PF03966">
    <property type="entry name" value="Trm112p"/>
    <property type="match status" value="1"/>
</dbReference>
<dbReference type="SUPFAM" id="SSF158997">
    <property type="entry name" value="Trm112p-like"/>
    <property type="match status" value="1"/>
</dbReference>
<reference key="1">
    <citation type="submission" date="2007-03" db="EMBL/GenBank/DDBJ databases">
        <authorList>
            <person name="Heidelberg J."/>
        </authorList>
    </citation>
    <scope>NUCLEOTIDE SEQUENCE [LARGE SCALE GENOMIC DNA]</scope>
    <source>
        <strain>ATCC 39541 / Classical Ogawa 395 / O395</strain>
    </source>
</reference>
<reference key="2">
    <citation type="journal article" date="2008" name="PLoS ONE">
        <title>A recalibrated molecular clock and independent origins for the cholera pandemic clones.</title>
        <authorList>
            <person name="Feng L."/>
            <person name="Reeves P.R."/>
            <person name="Lan R."/>
            <person name="Ren Y."/>
            <person name="Gao C."/>
            <person name="Zhou Z."/>
            <person name="Ren Y."/>
            <person name="Cheng J."/>
            <person name="Wang W."/>
            <person name="Wang J."/>
            <person name="Qian W."/>
            <person name="Li D."/>
            <person name="Wang L."/>
        </authorList>
    </citation>
    <scope>NUCLEOTIDE SEQUENCE [LARGE SCALE GENOMIC DNA]</scope>
    <source>
        <strain>ATCC 39541 / Classical Ogawa 395 / O395</strain>
    </source>
</reference>
<evidence type="ECO:0000255" key="1">
    <source>
        <dbReference type="HAMAP-Rule" id="MF_01187"/>
    </source>
</evidence>
<organism>
    <name type="scientific">Vibrio cholerae serotype O1 (strain ATCC 39541 / Classical Ogawa 395 / O395)</name>
    <dbReference type="NCBI Taxonomy" id="345073"/>
    <lineage>
        <taxon>Bacteria</taxon>
        <taxon>Pseudomonadati</taxon>
        <taxon>Pseudomonadota</taxon>
        <taxon>Gammaproteobacteria</taxon>
        <taxon>Vibrionales</taxon>
        <taxon>Vibrionaceae</taxon>
        <taxon>Vibrio</taxon>
    </lineage>
</organism>
<sequence length="59" mass="6788">MDHRLLEIVACPVCKGKLTYDKDRQELICKLDRLAYPIKEGIPVLLEPEARSMSMDEGR</sequence>
<protein>
    <recommendedName>
        <fullName evidence="1">UPF0434 protein VC0395_A1467/VC395_1991</fullName>
    </recommendedName>
</protein>
<comment type="similarity">
    <text evidence="1">Belongs to the UPF0434 family.</text>
</comment>
<feature type="chain" id="PRO_1000073084" description="UPF0434 protein VC0395_A1467/VC395_1991">
    <location>
        <begin position="1"/>
        <end position="59"/>
    </location>
</feature>
<gene>
    <name type="ordered locus">VC0395_A1467</name>
    <name type="ordered locus">VC395_1991</name>
</gene>
<name>Y2667_VIBC3</name>
<accession>A5F727</accession>
<accession>C3M1R8</accession>